<feature type="chain" id="PRO_0000132845" description="Early 53 kDa protein">
    <location>
        <begin position="1"/>
        <end position="455"/>
    </location>
</feature>
<feature type="zinc finger region" description="C4-type" evidence="1">
    <location>
        <begin position="374"/>
        <end position="394"/>
    </location>
</feature>
<feature type="region of interest" description="Disordered" evidence="2">
    <location>
        <begin position="20"/>
        <end position="42"/>
    </location>
</feature>
<organism>
    <name type="scientific">Orgyia pseudotsugata multicapsid polyhedrosis virus</name>
    <name type="common">OpMNPV</name>
    <dbReference type="NCBI Taxonomy" id="262177"/>
    <lineage>
        <taxon>Viruses</taxon>
        <taxon>Viruses incertae sedis</taxon>
        <taxon>Naldaviricetes</taxon>
        <taxon>Lefavirales</taxon>
        <taxon>Baculoviridae</taxon>
        <taxon>Alphabaculovirus</taxon>
        <taxon>Alphabaculovirus orpseudotsugatae</taxon>
    </lineage>
</organism>
<accession>O10368</accession>
<dbReference type="EMBL" id="U75930">
    <property type="protein sequence ID" value="AAC59136.1"/>
    <property type="molecule type" value="Genomic_DNA"/>
</dbReference>
<dbReference type="RefSeq" id="NP_046293.1">
    <property type="nucleotide sequence ID" value="NC_001875.2"/>
</dbReference>
<dbReference type="KEGG" id="vg:911986"/>
<dbReference type="OrthoDB" id="2566at10239"/>
<dbReference type="Proteomes" id="UP000009248">
    <property type="component" value="Genome"/>
</dbReference>
<dbReference type="GO" id="GO:0003677">
    <property type="term" value="F:DNA binding"/>
    <property type="evidence" value="ECO:0007669"/>
    <property type="project" value="UniProtKB-KW"/>
</dbReference>
<dbReference type="GO" id="GO:0008270">
    <property type="term" value="F:zinc ion binding"/>
    <property type="evidence" value="ECO:0007669"/>
    <property type="project" value="UniProtKB-KW"/>
</dbReference>
<dbReference type="InterPro" id="IPR010336">
    <property type="entry name" value="Baculo_ME53"/>
</dbReference>
<dbReference type="Pfam" id="PF06061">
    <property type="entry name" value="Baculo_ME53"/>
    <property type="match status" value="1"/>
</dbReference>
<gene>
    <name type="primary">ME53</name>
    <name type="ORF">ORF137</name>
</gene>
<keyword id="KW-0238">DNA-binding</keyword>
<keyword id="KW-0244">Early protein</keyword>
<keyword id="KW-0479">Metal-binding</keyword>
<keyword id="KW-1185">Reference proteome</keyword>
<keyword id="KW-0862">Zinc</keyword>
<keyword id="KW-0863">Zinc-finger</keyword>
<reference key="1">
    <citation type="journal article" date="1997" name="Virology">
        <title>The sequence of the Orgyia pseudotsugata multinucleocapsid nuclear polyhedrosis virus genome.</title>
        <authorList>
            <person name="Ahrens C.H."/>
            <person name="Russell R.R."/>
            <person name="Funk C.J."/>
            <person name="Evans J."/>
            <person name="Harwood S."/>
            <person name="Rohrmann G.F."/>
        </authorList>
    </citation>
    <scope>NUCLEOTIDE SEQUENCE [LARGE SCALE GENOMIC DNA]</scope>
</reference>
<proteinExistence type="predicted"/>
<name>ME53_NPVOP</name>
<evidence type="ECO:0000255" key="1"/>
<evidence type="ECO:0000256" key="2">
    <source>
        <dbReference type="SAM" id="MobiDB-lite"/>
    </source>
</evidence>
<organismHost>
    <name type="scientific">Orgyia pseudotsugata</name>
    <name type="common">Douglas-fir tussock moth</name>
    <dbReference type="NCBI Taxonomy" id="33414"/>
</organismHost>
<sequence length="455" mass="52257">MNWFKENNIFDNKLAKKPAASKLGASPTASRPAGSPAPRRVKPLNKSELAHAAIVKRIGRGSDRLNEISASFVPPEYGFRFDEVPACSHKLEYACERDLREHFLSDNEREAMKSLLRFATNYVLGYINSKDMLTFGRAAGLKLKNELEYVQESECTMCGYKFKDNTRVWMLYVIVRHPPRAASADEEFVPSPNTPDCFEFACCDCADNYPDQLNSHQVYPGINSLHAQRLVEAGFFYQYVFPLEYKTEYFTYNDVKIVHHEGPFKIIQRLLREYKRPNEHIVSITLRTTGGVVLKEINHNVRLMRYRNIYKEPTASDDVNCFTVSSSSELMKALDSGAFDSIQGTVFAEIYGFAIQEFVTGVITFPVRPVKGNYCAVCKKNKMYYSNPVLCCSKCGFTNRYIFNGKYDDLYFHPEAVQTHATHSTHGEFVRYYNLKLHAKICRERLEEYEAQNLQ</sequence>
<protein>
    <recommendedName>
        <fullName>Early 53 kDa protein</fullName>
    </recommendedName>
    <alternativeName>
        <fullName>ME-53</fullName>
    </alternativeName>
</protein>